<protein>
    <recommendedName>
        <fullName>Small hydrophobic protein</fullName>
    </recommendedName>
</protein>
<comment type="subcellular location">
    <subcellularLocation>
        <location evidence="2">Membrane</location>
        <topology evidence="2">Single-pass membrane protein</topology>
    </subcellularLocation>
</comment>
<keyword id="KW-0325">Glycoprotein</keyword>
<keyword id="KW-0472">Membrane</keyword>
<keyword id="KW-0812">Transmembrane</keyword>
<keyword id="KW-1133">Transmembrane helix</keyword>
<feature type="chain" id="PRO_0000142870" description="Small hydrophobic protein">
    <location>
        <begin position="1"/>
        <end position="174"/>
    </location>
</feature>
<feature type="transmembrane region" description="Helical" evidence="1">
    <location>
        <begin position="33"/>
        <end position="53"/>
    </location>
</feature>
<feature type="glycosylation site" description="N-linked (GlcNAc...) asparagine; by host" evidence="1">
    <location>
        <position position="165"/>
    </location>
</feature>
<evidence type="ECO:0000255" key="1"/>
<evidence type="ECO:0000305" key="2"/>
<organismHost>
    <name type="scientific">Meleagris gallopavo</name>
    <name type="common">Wild turkey</name>
    <dbReference type="NCBI Taxonomy" id="9103"/>
</organismHost>
<dbReference type="EMBL" id="S40185">
    <property type="protein sequence ID" value="AAB22546.1"/>
    <property type="molecule type" value="mRNA"/>
</dbReference>
<dbReference type="PIR" id="JQ1625">
    <property type="entry name" value="JQ1625"/>
</dbReference>
<dbReference type="SMR" id="P33496"/>
<dbReference type="GlyCosmos" id="P33496">
    <property type="glycosylation" value="1 site, No reported glycans"/>
</dbReference>
<dbReference type="GO" id="GO:0016020">
    <property type="term" value="C:membrane"/>
    <property type="evidence" value="ECO:0007669"/>
    <property type="project" value="UniProtKB-SubCell"/>
</dbReference>
<dbReference type="InterPro" id="IPR035250">
    <property type="entry name" value="Metap_SH"/>
</dbReference>
<dbReference type="Pfam" id="PF17512">
    <property type="entry name" value="Sh_2"/>
    <property type="match status" value="1"/>
</dbReference>
<reference key="1">
    <citation type="journal article" date="1992" name="J. Gen. Virol.">
        <title>Sequence analysis of the 22K, SH and G genes of turkey rhinotracheitis virus and their intergenic regions reveals a gene order different from that of other pneumoviruses.</title>
        <authorList>
            <person name="Ling R."/>
            <person name="Easton A.J."/>
            <person name="Pringle C.R."/>
        </authorList>
    </citation>
    <scope>NUCLEOTIDE SEQUENCE [MRNA]</scope>
</reference>
<organism>
    <name type="scientific">Turkey rhinotracheitis virus</name>
    <name type="common">TRTV</name>
    <dbReference type="NCBI Taxonomy" id="11264"/>
    <lineage>
        <taxon>Viruses</taxon>
        <taxon>Riboviria</taxon>
        <taxon>Orthornavirae</taxon>
        <taxon>Negarnaviricota</taxon>
        <taxon>Haploviricotina</taxon>
        <taxon>Monjiviricetes</taxon>
        <taxon>Mononegavirales</taxon>
        <taxon>Pneumoviridae</taxon>
        <taxon>Metapneumovirus</taxon>
        <taxon>Metapneumovirus avis</taxon>
    </lineage>
</organism>
<gene>
    <name type="primary">SH</name>
</gene>
<sequence length="174" mass="18796">MTSTVNLGSDTASKRTVIKSRCNSCCRILVSCVAVICAILALIFLVATIGLSVKLAFTVQEVHNCKQKLSGASTTTAAIYTTPSTMIEALQTNQLKLTTNERRSTPPDCLVEKKLCEGEVRYLKTKGCLGAREGEDLNCIDLVVECVGKPCGHNEDYKECICTNNGTATKCCYN</sequence>
<accession>P33496</accession>
<name>SH_TRTV</name>
<proteinExistence type="evidence at transcript level"/>